<reference key="1">
    <citation type="journal article" date="2003" name="Nature">
        <title>The genome sequence of Bacillus anthracis Ames and comparison to closely related bacteria.</title>
        <authorList>
            <person name="Read T.D."/>
            <person name="Peterson S.N."/>
            <person name="Tourasse N.J."/>
            <person name="Baillie L.W."/>
            <person name="Paulsen I.T."/>
            <person name="Nelson K.E."/>
            <person name="Tettelin H."/>
            <person name="Fouts D.E."/>
            <person name="Eisen J.A."/>
            <person name="Gill S.R."/>
            <person name="Holtzapple E.K."/>
            <person name="Okstad O.A."/>
            <person name="Helgason E."/>
            <person name="Rilstone J."/>
            <person name="Wu M."/>
            <person name="Kolonay J.F."/>
            <person name="Beanan M.J."/>
            <person name="Dodson R.J."/>
            <person name="Brinkac L.M."/>
            <person name="Gwinn M.L."/>
            <person name="DeBoy R.T."/>
            <person name="Madpu R."/>
            <person name="Daugherty S.C."/>
            <person name="Durkin A.S."/>
            <person name="Haft D.H."/>
            <person name="Nelson W.C."/>
            <person name="Peterson J.D."/>
            <person name="Pop M."/>
            <person name="Khouri H.M."/>
            <person name="Radune D."/>
            <person name="Benton J.L."/>
            <person name="Mahamoud Y."/>
            <person name="Jiang L."/>
            <person name="Hance I.R."/>
            <person name="Weidman J.F."/>
            <person name="Berry K.J."/>
            <person name="Plaut R.D."/>
            <person name="Wolf A.M."/>
            <person name="Watkins K.L."/>
            <person name="Nierman W.C."/>
            <person name="Hazen A."/>
            <person name="Cline R.T."/>
            <person name="Redmond C."/>
            <person name="Thwaite J.E."/>
            <person name="White O."/>
            <person name="Salzberg S.L."/>
            <person name="Thomason B."/>
            <person name="Friedlander A.M."/>
            <person name="Koehler T.M."/>
            <person name="Hanna P.C."/>
            <person name="Kolstoe A.-B."/>
            <person name="Fraser C.M."/>
        </authorList>
    </citation>
    <scope>NUCLEOTIDE SEQUENCE [LARGE SCALE GENOMIC DNA]</scope>
    <source>
        <strain>Ames / isolate Porton</strain>
    </source>
</reference>
<reference key="2">
    <citation type="journal article" date="2009" name="J. Bacteriol.">
        <title>The complete genome sequence of Bacillus anthracis Ames 'Ancestor'.</title>
        <authorList>
            <person name="Ravel J."/>
            <person name="Jiang L."/>
            <person name="Stanley S.T."/>
            <person name="Wilson M.R."/>
            <person name="Decker R.S."/>
            <person name="Read T.D."/>
            <person name="Worsham P."/>
            <person name="Keim P.S."/>
            <person name="Salzberg S.L."/>
            <person name="Fraser-Liggett C.M."/>
            <person name="Rasko D.A."/>
        </authorList>
    </citation>
    <scope>NUCLEOTIDE SEQUENCE [LARGE SCALE GENOMIC DNA]</scope>
    <source>
        <strain>Ames ancestor</strain>
    </source>
</reference>
<reference key="3">
    <citation type="submission" date="2004-01" db="EMBL/GenBank/DDBJ databases">
        <title>Complete genome sequence of Bacillus anthracis Sterne.</title>
        <authorList>
            <person name="Brettin T.S."/>
            <person name="Bruce D."/>
            <person name="Challacombe J.F."/>
            <person name="Gilna P."/>
            <person name="Han C."/>
            <person name="Hill K."/>
            <person name="Hitchcock P."/>
            <person name="Jackson P."/>
            <person name="Keim P."/>
            <person name="Longmire J."/>
            <person name="Lucas S."/>
            <person name="Okinaka R."/>
            <person name="Richardson P."/>
            <person name="Rubin E."/>
            <person name="Tice H."/>
        </authorList>
    </citation>
    <scope>NUCLEOTIDE SEQUENCE [LARGE SCALE GENOMIC DNA]</scope>
    <source>
        <strain>Sterne</strain>
    </source>
</reference>
<comment type="function">
    <text evidence="1">Catalyzes the conversion of lactate to pyruvate.</text>
</comment>
<comment type="catalytic activity">
    <reaction evidence="1">
        <text>(S)-lactate + NAD(+) = pyruvate + NADH + H(+)</text>
        <dbReference type="Rhea" id="RHEA:23444"/>
        <dbReference type="ChEBI" id="CHEBI:15361"/>
        <dbReference type="ChEBI" id="CHEBI:15378"/>
        <dbReference type="ChEBI" id="CHEBI:16651"/>
        <dbReference type="ChEBI" id="CHEBI:57540"/>
        <dbReference type="ChEBI" id="CHEBI:57945"/>
        <dbReference type="EC" id="1.1.1.27"/>
    </reaction>
</comment>
<comment type="activity regulation">
    <text evidence="1">Allosterically activated by fructose 1,6-bisphosphate (FBP).</text>
</comment>
<comment type="pathway">
    <text evidence="1">Fermentation; pyruvate fermentation to lactate; (S)-lactate from pyruvate: step 1/1.</text>
</comment>
<comment type="subunit">
    <text evidence="1">Homotetramer.</text>
</comment>
<comment type="subcellular location">
    <subcellularLocation>
        <location evidence="1">Cytoplasm</location>
    </subcellularLocation>
</comment>
<comment type="similarity">
    <text evidence="1">Belongs to the LDH/MDH superfamily. LDH family.</text>
</comment>
<dbReference type="EC" id="1.1.1.27" evidence="1"/>
<dbReference type="EMBL" id="AE016879">
    <property type="protein sequence ID" value="AAP28797.1"/>
    <property type="molecule type" value="Genomic_DNA"/>
</dbReference>
<dbReference type="EMBL" id="AE017334">
    <property type="protein sequence ID" value="AAT34253.1"/>
    <property type="molecule type" value="Genomic_DNA"/>
</dbReference>
<dbReference type="EMBL" id="AE017225">
    <property type="protein sequence ID" value="AAT57056.1"/>
    <property type="molecule type" value="Genomic_DNA"/>
</dbReference>
<dbReference type="RefSeq" id="NP_847311.1">
    <property type="nucleotide sequence ID" value="NC_003997.3"/>
</dbReference>
<dbReference type="RefSeq" id="WP_000715339.1">
    <property type="nucleotide sequence ID" value="NZ_WXXJ01000032.1"/>
</dbReference>
<dbReference type="RefSeq" id="YP_031006.1">
    <property type="nucleotide sequence ID" value="NC_005945.1"/>
</dbReference>
<dbReference type="SMR" id="Q81K80"/>
<dbReference type="STRING" id="261594.GBAA_5125"/>
<dbReference type="DNASU" id="1084439"/>
<dbReference type="KEGG" id="ban:BA_5125"/>
<dbReference type="KEGG" id="bar:GBAA_5125"/>
<dbReference type="KEGG" id="bat:BAS4762"/>
<dbReference type="PATRIC" id="fig|198094.11.peg.5086"/>
<dbReference type="eggNOG" id="COG0039">
    <property type="taxonomic scope" value="Bacteria"/>
</dbReference>
<dbReference type="HOGENOM" id="CLU_045401_1_1_9"/>
<dbReference type="OMA" id="EGQYGHK"/>
<dbReference type="OrthoDB" id="9802969at2"/>
<dbReference type="UniPathway" id="UPA00554">
    <property type="reaction ID" value="UER00611"/>
</dbReference>
<dbReference type="Proteomes" id="UP000000427">
    <property type="component" value="Chromosome"/>
</dbReference>
<dbReference type="Proteomes" id="UP000000594">
    <property type="component" value="Chromosome"/>
</dbReference>
<dbReference type="GO" id="GO:0005737">
    <property type="term" value="C:cytoplasm"/>
    <property type="evidence" value="ECO:0007669"/>
    <property type="project" value="UniProtKB-SubCell"/>
</dbReference>
<dbReference type="GO" id="GO:0004459">
    <property type="term" value="F:L-lactate dehydrogenase activity"/>
    <property type="evidence" value="ECO:0007669"/>
    <property type="project" value="UniProtKB-UniRule"/>
</dbReference>
<dbReference type="GO" id="GO:0006096">
    <property type="term" value="P:glycolytic process"/>
    <property type="evidence" value="ECO:0007669"/>
    <property type="project" value="UniProtKB-UniRule"/>
</dbReference>
<dbReference type="GO" id="GO:0006089">
    <property type="term" value="P:lactate metabolic process"/>
    <property type="evidence" value="ECO:0007669"/>
    <property type="project" value="TreeGrafter"/>
</dbReference>
<dbReference type="CDD" id="cd05291">
    <property type="entry name" value="HicDH_like"/>
    <property type="match status" value="1"/>
</dbReference>
<dbReference type="FunFam" id="3.90.110.10:FF:000005">
    <property type="entry name" value="L-lactate dehydrogenase"/>
    <property type="match status" value="1"/>
</dbReference>
<dbReference type="FunFam" id="3.40.50.720:FF:000018">
    <property type="entry name" value="Malate dehydrogenase"/>
    <property type="match status" value="1"/>
</dbReference>
<dbReference type="Gene3D" id="3.90.110.10">
    <property type="entry name" value="Lactate dehydrogenase/glycoside hydrolase, family 4, C-terminal"/>
    <property type="match status" value="1"/>
</dbReference>
<dbReference type="Gene3D" id="3.40.50.720">
    <property type="entry name" value="NAD(P)-binding Rossmann-like Domain"/>
    <property type="match status" value="1"/>
</dbReference>
<dbReference type="HAMAP" id="MF_00488">
    <property type="entry name" value="Lactate_dehydrog"/>
    <property type="match status" value="1"/>
</dbReference>
<dbReference type="InterPro" id="IPR001557">
    <property type="entry name" value="L-lactate/malate_DH"/>
</dbReference>
<dbReference type="InterPro" id="IPR011304">
    <property type="entry name" value="L-lactate_DH"/>
</dbReference>
<dbReference type="InterPro" id="IPR018177">
    <property type="entry name" value="L-lactate_DH_AS"/>
</dbReference>
<dbReference type="InterPro" id="IPR022383">
    <property type="entry name" value="Lactate/malate_DH_C"/>
</dbReference>
<dbReference type="InterPro" id="IPR001236">
    <property type="entry name" value="Lactate/malate_DH_N"/>
</dbReference>
<dbReference type="InterPro" id="IPR015955">
    <property type="entry name" value="Lactate_DH/Glyco_Ohase_4_C"/>
</dbReference>
<dbReference type="InterPro" id="IPR036291">
    <property type="entry name" value="NAD(P)-bd_dom_sf"/>
</dbReference>
<dbReference type="NCBIfam" id="TIGR01771">
    <property type="entry name" value="L-LDH-NAD"/>
    <property type="match status" value="1"/>
</dbReference>
<dbReference type="NCBIfam" id="NF000824">
    <property type="entry name" value="PRK00066.1"/>
    <property type="match status" value="1"/>
</dbReference>
<dbReference type="NCBIfam" id="NF004863">
    <property type="entry name" value="PRK06223.1"/>
    <property type="match status" value="1"/>
</dbReference>
<dbReference type="PANTHER" id="PTHR43128">
    <property type="entry name" value="L-2-HYDROXYCARBOXYLATE DEHYDROGENASE (NAD(P)(+))"/>
    <property type="match status" value="1"/>
</dbReference>
<dbReference type="PANTHER" id="PTHR43128:SF16">
    <property type="entry name" value="L-LACTATE DEHYDROGENASE"/>
    <property type="match status" value="1"/>
</dbReference>
<dbReference type="Pfam" id="PF02866">
    <property type="entry name" value="Ldh_1_C"/>
    <property type="match status" value="1"/>
</dbReference>
<dbReference type="Pfam" id="PF00056">
    <property type="entry name" value="Ldh_1_N"/>
    <property type="match status" value="1"/>
</dbReference>
<dbReference type="PIRSF" id="PIRSF000102">
    <property type="entry name" value="Lac_mal_DH"/>
    <property type="match status" value="1"/>
</dbReference>
<dbReference type="PRINTS" id="PR00086">
    <property type="entry name" value="LLDHDRGNASE"/>
</dbReference>
<dbReference type="SUPFAM" id="SSF56327">
    <property type="entry name" value="LDH C-terminal domain-like"/>
    <property type="match status" value="1"/>
</dbReference>
<dbReference type="SUPFAM" id="SSF51735">
    <property type="entry name" value="NAD(P)-binding Rossmann-fold domains"/>
    <property type="match status" value="1"/>
</dbReference>
<dbReference type="PROSITE" id="PS00064">
    <property type="entry name" value="L_LDH"/>
    <property type="match status" value="1"/>
</dbReference>
<gene>
    <name evidence="1" type="primary">ldh2</name>
    <name type="synonym">ldh-2</name>
    <name type="ordered locus">BA_5125</name>
    <name type="ordered locus">GBAA_5125</name>
    <name type="ordered locus">BAS4762</name>
</gene>
<feature type="chain" id="PRO_0000168314" description="L-lactate dehydrogenase 2">
    <location>
        <begin position="1"/>
        <end position="314"/>
    </location>
</feature>
<feature type="active site" description="Proton acceptor" evidence="1">
    <location>
        <position position="178"/>
    </location>
</feature>
<feature type="binding site" evidence="1">
    <location>
        <position position="16"/>
    </location>
    <ligand>
        <name>NAD(+)</name>
        <dbReference type="ChEBI" id="CHEBI:57540"/>
    </ligand>
</feature>
<feature type="binding site" evidence="1">
    <location>
        <position position="37"/>
    </location>
    <ligand>
        <name>NAD(+)</name>
        <dbReference type="ChEBI" id="CHEBI:57540"/>
    </ligand>
</feature>
<feature type="binding site" evidence="1">
    <location>
        <position position="42"/>
    </location>
    <ligand>
        <name>NAD(+)</name>
        <dbReference type="ChEBI" id="CHEBI:57540"/>
    </ligand>
</feature>
<feature type="binding site" evidence="1">
    <location>
        <position position="68"/>
    </location>
    <ligand>
        <name>NAD(+)</name>
        <dbReference type="ChEBI" id="CHEBI:57540"/>
    </ligand>
</feature>
<feature type="binding site" evidence="1">
    <location>
        <begin position="82"/>
        <end position="83"/>
    </location>
    <ligand>
        <name>NAD(+)</name>
        <dbReference type="ChEBI" id="CHEBI:57540"/>
    </ligand>
</feature>
<feature type="binding site" evidence="1">
    <location>
        <position position="85"/>
    </location>
    <ligand>
        <name>substrate</name>
    </ligand>
</feature>
<feature type="binding site" evidence="1">
    <location>
        <position position="91"/>
    </location>
    <ligand>
        <name>substrate</name>
    </ligand>
</feature>
<feature type="binding site" evidence="1">
    <location>
        <begin position="121"/>
        <end position="123"/>
    </location>
    <ligand>
        <name>NAD(+)</name>
        <dbReference type="ChEBI" id="CHEBI:57540"/>
    </ligand>
</feature>
<feature type="binding site" evidence="1">
    <location>
        <begin position="123"/>
        <end position="126"/>
    </location>
    <ligand>
        <name>substrate</name>
    </ligand>
</feature>
<feature type="binding site" evidence="1">
    <location>
        <position position="146"/>
    </location>
    <ligand>
        <name>NAD(+)</name>
        <dbReference type="ChEBI" id="CHEBI:57540"/>
    </ligand>
</feature>
<feature type="binding site" evidence="1">
    <location>
        <begin position="151"/>
        <end position="154"/>
    </location>
    <ligand>
        <name>substrate</name>
    </ligand>
</feature>
<feature type="binding site" evidence="1">
    <location>
        <position position="156"/>
    </location>
    <ligand>
        <name>beta-D-fructose 1,6-bisphosphate</name>
        <dbReference type="ChEBI" id="CHEBI:32966"/>
        <note>allosteric activator</note>
    </ligand>
</feature>
<feature type="binding site" evidence="1">
    <location>
        <position position="171"/>
    </location>
    <ligand>
        <name>beta-D-fructose 1,6-bisphosphate</name>
        <dbReference type="ChEBI" id="CHEBI:32966"/>
        <note>allosteric activator</note>
    </ligand>
</feature>
<feature type="binding site" evidence="1">
    <location>
        <position position="232"/>
    </location>
    <ligand>
        <name>substrate</name>
    </ligand>
</feature>
<feature type="modified residue" description="Phosphotyrosine" evidence="1">
    <location>
        <position position="223"/>
    </location>
</feature>
<proteinExistence type="inferred from homology"/>
<organism>
    <name type="scientific">Bacillus anthracis</name>
    <dbReference type="NCBI Taxonomy" id="1392"/>
    <lineage>
        <taxon>Bacteria</taxon>
        <taxon>Bacillati</taxon>
        <taxon>Bacillota</taxon>
        <taxon>Bacilli</taxon>
        <taxon>Bacillales</taxon>
        <taxon>Bacillaceae</taxon>
        <taxon>Bacillus</taxon>
        <taxon>Bacillus cereus group</taxon>
    </lineage>
</organism>
<accession>Q81K80</accession>
<accession>Q6HRN2</accession>
<accession>Q6KKZ7</accession>
<sequence length="314" mass="34620">MKKGINRVVLVGTGAVGCSYAYSMINQGVAEEFVLVDVNEAKAEGEAMDLSHAVPFSPSPTKVWSGSYADCKDADLVVITAGLPQKPGETRLDLVEKNTKIFKQIVRGIMDSGFDGIFLIATNPVDILTYVTWKESGLPKERVIGSGTTLDSARFRYMLGDYLDVDPRNVHAYIVGEHGDTELPVWSHATIGVQKLETILANNEQYKQEDLDKIFENVRDAAYHIIERKGATYYGIGMSLLRVTKAILNNENSVLTVSAYLEGQYGEKDAYVGVPAVINREGVREIVELELNEEEKAKFAHSVKVLKETMAPVL</sequence>
<keyword id="KW-0021">Allosteric enzyme</keyword>
<keyword id="KW-0963">Cytoplasm</keyword>
<keyword id="KW-0520">NAD</keyword>
<keyword id="KW-0560">Oxidoreductase</keyword>
<keyword id="KW-0597">Phosphoprotein</keyword>
<keyword id="KW-1185">Reference proteome</keyword>
<name>LDH2_BACAN</name>
<evidence type="ECO:0000255" key="1">
    <source>
        <dbReference type="HAMAP-Rule" id="MF_00488"/>
    </source>
</evidence>
<protein>
    <recommendedName>
        <fullName evidence="1">L-lactate dehydrogenase 2</fullName>
        <shortName evidence="1">L-LDH 2</shortName>
        <ecNumber evidence="1">1.1.1.27</ecNumber>
    </recommendedName>
</protein>